<proteinExistence type="inferred from homology"/>
<evidence type="ECO:0000255" key="1">
    <source>
        <dbReference type="PROSITE-ProRule" id="PRU01182"/>
    </source>
</evidence>
<evidence type="ECO:0000305" key="2"/>
<keyword id="KW-0378">Hydrolase</keyword>
<keyword id="KW-0479">Metal-binding</keyword>
<keyword id="KW-0482">Metalloprotease</keyword>
<keyword id="KW-0645">Protease</keyword>
<keyword id="KW-0862">Zinc</keyword>
<reference key="1">
    <citation type="journal article" date="2007" name="DNA Res.">
        <title>Complete genomic structure of the bloom-forming toxic cyanobacterium Microcystis aeruginosa NIES-843.</title>
        <authorList>
            <person name="Kaneko T."/>
            <person name="Nakajima N."/>
            <person name="Okamoto S."/>
            <person name="Suzuki I."/>
            <person name="Tanabe Y."/>
            <person name="Tamaoki M."/>
            <person name="Nakamura Y."/>
            <person name="Kasai F."/>
            <person name="Watanabe A."/>
            <person name="Kawashima K."/>
            <person name="Kishida Y."/>
            <person name="Ono A."/>
            <person name="Shimizu Y."/>
            <person name="Takahashi C."/>
            <person name="Minami C."/>
            <person name="Fujishiro T."/>
            <person name="Kohara M."/>
            <person name="Katoh M."/>
            <person name="Nakazaki N."/>
            <person name="Nakayama S."/>
            <person name="Yamada M."/>
            <person name="Tabata S."/>
            <person name="Watanabe M.M."/>
        </authorList>
    </citation>
    <scope>NUCLEOTIDE SEQUENCE [LARGE SCALE GENOMIC DNA]</scope>
    <source>
        <strain>NIES-843 / IAM M-247</strain>
    </source>
</reference>
<name>Y4435_MICAN</name>
<protein>
    <recommendedName>
        <fullName>UPF0758 protein MAE_44350</fullName>
    </recommendedName>
</protein>
<organism>
    <name type="scientific">Microcystis aeruginosa (strain NIES-843 / IAM M-2473)</name>
    <dbReference type="NCBI Taxonomy" id="449447"/>
    <lineage>
        <taxon>Bacteria</taxon>
        <taxon>Bacillati</taxon>
        <taxon>Cyanobacteriota</taxon>
        <taxon>Cyanophyceae</taxon>
        <taxon>Oscillatoriophycideae</taxon>
        <taxon>Chroococcales</taxon>
        <taxon>Microcystaceae</taxon>
        <taxon>Microcystis</taxon>
    </lineage>
</organism>
<comment type="similarity">
    <text evidence="2">Belongs to the UPF0758 family.</text>
</comment>
<gene>
    <name type="ordered locus">MAE_44350</name>
</gene>
<feature type="chain" id="PRO_1000089825" description="UPF0758 protein MAE_44350">
    <location>
        <begin position="1"/>
        <end position="243"/>
    </location>
</feature>
<feature type="domain" description="MPN" evidence="1">
    <location>
        <begin position="113"/>
        <end position="235"/>
    </location>
</feature>
<feature type="short sequence motif" description="JAMM motif" evidence="1">
    <location>
        <begin position="184"/>
        <end position="197"/>
    </location>
</feature>
<feature type="binding site" evidence="1">
    <location>
        <position position="184"/>
    </location>
    <ligand>
        <name>Zn(2+)</name>
        <dbReference type="ChEBI" id="CHEBI:29105"/>
        <note>catalytic</note>
    </ligand>
</feature>
<feature type="binding site" evidence="1">
    <location>
        <position position="186"/>
    </location>
    <ligand>
        <name>Zn(2+)</name>
        <dbReference type="ChEBI" id="CHEBI:29105"/>
        <note>catalytic</note>
    </ligand>
</feature>
<feature type="binding site" evidence="1">
    <location>
        <position position="197"/>
    </location>
    <ligand>
        <name>Zn(2+)</name>
        <dbReference type="ChEBI" id="CHEBI:29105"/>
        <note>catalytic</note>
    </ligand>
</feature>
<sequence>MTYSLRIADIPVSERPRERLISVGAKNLSNAELLAILLATGQGKGKLSAVGLGQHILNELSKYRRDPLDVLRDIHPQELTAIHGIGPAKATTILAAIELGKRAFQRRPTEKMVIDSPDTAAAILGHELMYQSQERFAVILLDVKNQLIALKVITIGTATETLVHPREIFREVVKQSATKLIIAHNHPTGSLVPSQDDILLTEQLLQGATYLAIPLLDHLILGNGNFQSLRQITDLWEKYPQED</sequence>
<accession>B0JTF4</accession>
<dbReference type="EMBL" id="AP009552">
    <property type="protein sequence ID" value="BAG04257.1"/>
    <property type="molecule type" value="Genomic_DNA"/>
</dbReference>
<dbReference type="SMR" id="B0JTF4"/>
<dbReference type="STRING" id="449447.MAE_44350"/>
<dbReference type="PaxDb" id="449447-MAE_44350"/>
<dbReference type="EnsemblBacteria" id="BAG04257">
    <property type="protein sequence ID" value="BAG04257"/>
    <property type="gene ID" value="MAE_44350"/>
</dbReference>
<dbReference type="KEGG" id="mar:MAE_44350"/>
<dbReference type="eggNOG" id="COG2003">
    <property type="taxonomic scope" value="Bacteria"/>
</dbReference>
<dbReference type="HOGENOM" id="CLU_073529_0_2_3"/>
<dbReference type="BioCyc" id="MAER449447:MAE_RS19210-MONOMER"/>
<dbReference type="Proteomes" id="UP000001510">
    <property type="component" value="Chromosome"/>
</dbReference>
<dbReference type="GO" id="GO:0046872">
    <property type="term" value="F:metal ion binding"/>
    <property type="evidence" value="ECO:0007669"/>
    <property type="project" value="UniProtKB-KW"/>
</dbReference>
<dbReference type="GO" id="GO:0008237">
    <property type="term" value="F:metallopeptidase activity"/>
    <property type="evidence" value="ECO:0007669"/>
    <property type="project" value="UniProtKB-KW"/>
</dbReference>
<dbReference type="GO" id="GO:0006508">
    <property type="term" value="P:proteolysis"/>
    <property type="evidence" value="ECO:0007669"/>
    <property type="project" value="UniProtKB-KW"/>
</dbReference>
<dbReference type="CDD" id="cd08071">
    <property type="entry name" value="MPN_DUF2466"/>
    <property type="match status" value="1"/>
</dbReference>
<dbReference type="Gene3D" id="3.40.140.10">
    <property type="entry name" value="Cytidine Deaminase, domain 2"/>
    <property type="match status" value="1"/>
</dbReference>
<dbReference type="InterPro" id="IPR037518">
    <property type="entry name" value="MPN"/>
</dbReference>
<dbReference type="InterPro" id="IPR025657">
    <property type="entry name" value="RadC_JAB"/>
</dbReference>
<dbReference type="InterPro" id="IPR001405">
    <property type="entry name" value="UPF0758"/>
</dbReference>
<dbReference type="InterPro" id="IPR046778">
    <property type="entry name" value="UPF0758_N"/>
</dbReference>
<dbReference type="NCBIfam" id="NF000642">
    <property type="entry name" value="PRK00024.1"/>
    <property type="match status" value="1"/>
</dbReference>
<dbReference type="NCBIfam" id="TIGR00608">
    <property type="entry name" value="radc"/>
    <property type="match status" value="1"/>
</dbReference>
<dbReference type="PANTHER" id="PTHR30471">
    <property type="entry name" value="DNA REPAIR PROTEIN RADC"/>
    <property type="match status" value="1"/>
</dbReference>
<dbReference type="PANTHER" id="PTHR30471:SF3">
    <property type="entry name" value="UPF0758 PROTEIN YEES-RELATED"/>
    <property type="match status" value="1"/>
</dbReference>
<dbReference type="Pfam" id="PF04002">
    <property type="entry name" value="RadC"/>
    <property type="match status" value="1"/>
</dbReference>
<dbReference type="Pfam" id="PF20582">
    <property type="entry name" value="UPF0758_N"/>
    <property type="match status" value="1"/>
</dbReference>
<dbReference type="PROSITE" id="PS50249">
    <property type="entry name" value="MPN"/>
    <property type="match status" value="1"/>
</dbReference>